<sequence length="1171" mass="133840">MEIEPPQAVEVVDPEVRSYVYSLVTALGGTAGNETGRYVLGDDALGCLRDLKKWLRFYDEKLNRMDVARCLAECKLLNGDLVPIISLYGDAEQSDKHKARIMLACLELLVPLTWPVEVHGQMTFNHHRHTPYLQYSQVEYKRGILGFAPSPILRALIRVGLPSMAIPRSERSTRDEGIIRLMLYFFRNIAVISSPPNLPIDSDDDKATRSATINAFQQQDVFALLLTMCSNMGNDFTFQDVIILEILFNLVKGVDVDQLFKLNERAGTIKTDDLQDILQKEDELNREHSKNAPTRHGRFGTMIWVKRDDEKLSTVSGQDVLKGDRATFLKMDKTKKWNKPKFKREVVDPSSNNFNLKVRLTSSATKHLRTFVEEFLDSGFNPLFTHLRKAIEREADRVTESTSRQFWYAVSWFLHAERARREHQKETRQRSKGTSREIEPDSFSLVASVLNQETFVGLNRFMQHSIDFKDWQDLTAGMKCLTQILLTVQEMAISPLEEDQEIAENIQSRIFYEETTHDRVLSILRNYKDQGFWYLDACTELAHVFLRMLEQYSKQNVDMQVRSRRRARRKQAQAAVPNQNETEAGGEHDSDTEDIAEAHQTVTERSFDFKRFSVRFCTQKSVDTFVALTKYYRELDSEQLKRAHRFFYRVAFKQDMSVLLFRVDIISLLFKMIKGPEGLDPSKPPFKDWEELIRQIFKKLVRKLGERPELVVELLFSKINATVFYLEYGHEKQTMSESRPATELELKPGSASTLDEKIRIVVSALIQEDKKPLVKWLSQVLGSAASERLSWEMEAEARATSSPQEQSDRSKAPSIAVLPEDDGCRTAMFRNARLRLLMRLAGLERLDEDVLGASWMIPSSVPSSNLKEYHELIEKHCESPAEDIDGVDPRDLMRRKRTAADTDSSRHEFTENVNFGSDSEGEDDGVLFPPNLPERSKALKTLKQRRRRRRRSDDAEESGPDEAVLEARRTAREKNALERQRKIKSDLYVHASDDESDEEADIEFFAKEEMRRQAQARRVAEALETGMPENNTTKKKSKASAGRKRKVKPVLELDDDDSEASPPKRRRSDEVIESDSDGELMVGIGSTSPRRSQTPPTSADNIFGSEKSPSPMFPWSVGVDQMMAKLQGKDEASADNGESNEDEGEDVLSGTGRTRRRRTMGGFVIGSDSDS</sequence>
<keyword id="KW-0131">Cell cycle</keyword>
<keyword id="KW-0227">DNA damage</keyword>
<keyword id="KW-0234">DNA repair</keyword>
<keyword id="KW-0236">DNA replication inhibitor</keyword>
<keyword id="KW-0469">Meiosis</keyword>
<keyword id="KW-0539">Nucleus</keyword>
<keyword id="KW-1185">Reference proteome</keyword>
<protein>
    <recommendedName>
        <fullName>Topoisomerase 1-associated factor 1</fullName>
    </recommendedName>
</protein>
<accession>Q1DM35</accession>
<accession>A0A0D6K9N4</accession>
<accession>J3K6H1</accession>
<comment type="function">
    <text evidence="1">Forms a fork protection complex (FPC) with CSM3 and which is required for chromosome segregation during meiosis and DNA damage repair. FPC coordinates leading and lagging strand synthesis and moves with the replication fork. FPC stabilizes replication forks in a configuration that is recognized by replication checkpoint sensors (By similarity).</text>
</comment>
<comment type="subunit">
    <text evidence="1">Component of the fork protection complex (FPC) consisting of TOF1 and CSM3.</text>
</comment>
<comment type="subcellular location">
    <subcellularLocation>
        <location evidence="1">Nucleus</location>
    </subcellularLocation>
</comment>
<comment type="similarity">
    <text evidence="3">Belongs to the timeless family.</text>
</comment>
<comment type="sequence caution" evidence="3">
    <conflict type="erroneous gene model prediction">
        <sequence resource="EMBL-CDS" id="EAS29882"/>
    </conflict>
</comment>
<proteinExistence type="inferred from homology"/>
<evidence type="ECO:0000250" key="1"/>
<evidence type="ECO:0000256" key="2">
    <source>
        <dbReference type="SAM" id="MobiDB-lite"/>
    </source>
</evidence>
<evidence type="ECO:0000305" key="3"/>
<feature type="chain" id="PRO_0000301736" description="Topoisomerase 1-associated factor 1">
    <location>
        <begin position="1"/>
        <end position="1171"/>
    </location>
</feature>
<feature type="region of interest" description="Disordered" evidence="2">
    <location>
        <begin position="568"/>
        <end position="592"/>
    </location>
</feature>
<feature type="region of interest" description="Disordered" evidence="2">
    <location>
        <begin position="880"/>
        <end position="1171"/>
    </location>
</feature>
<feature type="compositionally biased region" description="Basic and acidic residues" evidence="2">
    <location>
        <begin position="887"/>
        <end position="910"/>
    </location>
</feature>
<feature type="compositionally biased region" description="Basic residues" evidence="2">
    <location>
        <begin position="938"/>
        <end position="950"/>
    </location>
</feature>
<feature type="compositionally biased region" description="Acidic residues" evidence="2">
    <location>
        <begin position="954"/>
        <end position="964"/>
    </location>
</feature>
<feature type="compositionally biased region" description="Basic and acidic residues" evidence="2">
    <location>
        <begin position="965"/>
        <end position="993"/>
    </location>
</feature>
<feature type="compositionally biased region" description="Basic residues" evidence="2">
    <location>
        <begin position="1033"/>
        <end position="1048"/>
    </location>
</feature>
<feature type="compositionally biased region" description="Polar residues" evidence="2">
    <location>
        <begin position="1085"/>
        <end position="1100"/>
    </location>
</feature>
<name>TOF1_COCIM</name>
<gene>
    <name type="primary">TOF1</name>
    <name type="ORF">CIMG_08628</name>
</gene>
<dbReference type="EMBL" id="GG704913">
    <property type="protein sequence ID" value="EAS29882.2"/>
    <property type="status" value="ALT_SEQ"/>
    <property type="molecule type" value="Genomic_DNA"/>
</dbReference>
<dbReference type="RefSeq" id="XP_001241465.2">
    <property type="nucleotide sequence ID" value="XM_001241464.2"/>
</dbReference>
<dbReference type="SMR" id="Q1DM35"/>
<dbReference type="FunCoup" id="Q1DM35">
    <property type="interactions" value="47"/>
</dbReference>
<dbReference type="STRING" id="246410.Q1DM35"/>
<dbReference type="GeneID" id="4560065"/>
<dbReference type="KEGG" id="cim:CIMG_08628"/>
<dbReference type="InParanoid" id="Q1DM35"/>
<dbReference type="OrthoDB" id="310853at2759"/>
<dbReference type="Proteomes" id="UP000001261">
    <property type="component" value="Unassembled WGS sequence"/>
</dbReference>
<dbReference type="GO" id="GO:0031298">
    <property type="term" value="C:replication fork protection complex"/>
    <property type="evidence" value="ECO:0007669"/>
    <property type="project" value="TreeGrafter"/>
</dbReference>
<dbReference type="GO" id="GO:0003677">
    <property type="term" value="F:DNA binding"/>
    <property type="evidence" value="ECO:0007669"/>
    <property type="project" value="TreeGrafter"/>
</dbReference>
<dbReference type="GO" id="GO:0006281">
    <property type="term" value="P:DNA repair"/>
    <property type="evidence" value="ECO:0007669"/>
    <property type="project" value="UniProtKB-KW"/>
</dbReference>
<dbReference type="GO" id="GO:0000076">
    <property type="term" value="P:DNA replication checkpoint signaling"/>
    <property type="evidence" value="ECO:0007669"/>
    <property type="project" value="TreeGrafter"/>
</dbReference>
<dbReference type="GO" id="GO:0051321">
    <property type="term" value="P:meiotic cell cycle"/>
    <property type="evidence" value="ECO:0007669"/>
    <property type="project" value="UniProtKB-KW"/>
</dbReference>
<dbReference type="GO" id="GO:0043111">
    <property type="term" value="P:replication fork arrest"/>
    <property type="evidence" value="ECO:0007669"/>
    <property type="project" value="TreeGrafter"/>
</dbReference>
<dbReference type="InterPro" id="IPR044998">
    <property type="entry name" value="Timeless"/>
</dbReference>
<dbReference type="InterPro" id="IPR006906">
    <property type="entry name" value="Timeless_N"/>
</dbReference>
<dbReference type="PANTHER" id="PTHR22940:SF4">
    <property type="entry name" value="PROTEIN TIMELESS HOMOLOG"/>
    <property type="match status" value="1"/>
</dbReference>
<dbReference type="PANTHER" id="PTHR22940">
    <property type="entry name" value="TIMEOUT/TIMELESS-2"/>
    <property type="match status" value="1"/>
</dbReference>
<dbReference type="Pfam" id="PF04821">
    <property type="entry name" value="TIMELESS"/>
    <property type="match status" value="1"/>
</dbReference>
<organism>
    <name type="scientific">Coccidioides immitis (strain RS)</name>
    <name type="common">Valley fever fungus</name>
    <dbReference type="NCBI Taxonomy" id="246410"/>
    <lineage>
        <taxon>Eukaryota</taxon>
        <taxon>Fungi</taxon>
        <taxon>Dikarya</taxon>
        <taxon>Ascomycota</taxon>
        <taxon>Pezizomycotina</taxon>
        <taxon>Eurotiomycetes</taxon>
        <taxon>Eurotiomycetidae</taxon>
        <taxon>Onygenales</taxon>
        <taxon>Onygenaceae</taxon>
        <taxon>Coccidioides</taxon>
    </lineage>
</organism>
<reference key="1">
    <citation type="journal article" date="2009" name="Genome Res.">
        <title>Comparative genomic analyses of the human fungal pathogens Coccidioides and their relatives.</title>
        <authorList>
            <person name="Sharpton T.J."/>
            <person name="Stajich J.E."/>
            <person name="Rounsley S.D."/>
            <person name="Gardner M.J."/>
            <person name="Wortman J.R."/>
            <person name="Jordar V.S."/>
            <person name="Maiti R."/>
            <person name="Kodira C.D."/>
            <person name="Neafsey D.E."/>
            <person name="Zeng Q."/>
            <person name="Hung C.-Y."/>
            <person name="McMahan C."/>
            <person name="Muszewska A."/>
            <person name="Grynberg M."/>
            <person name="Mandel M.A."/>
            <person name="Kellner E.M."/>
            <person name="Barker B.M."/>
            <person name="Galgiani J.N."/>
            <person name="Orbach M.J."/>
            <person name="Kirkland T.N."/>
            <person name="Cole G.T."/>
            <person name="Henn M.R."/>
            <person name="Birren B.W."/>
            <person name="Taylor J.W."/>
        </authorList>
    </citation>
    <scope>NUCLEOTIDE SEQUENCE [LARGE SCALE GENOMIC DNA]</scope>
    <source>
        <strain>RS</strain>
    </source>
</reference>
<reference key="2">
    <citation type="journal article" date="2010" name="Genome Res.">
        <title>Population genomic sequencing of Coccidioides fungi reveals recent hybridization and transposon control.</title>
        <authorList>
            <person name="Neafsey D.E."/>
            <person name="Barker B.M."/>
            <person name="Sharpton T.J."/>
            <person name="Stajich J.E."/>
            <person name="Park D.J."/>
            <person name="Whiston E."/>
            <person name="Hung C.-Y."/>
            <person name="McMahan C."/>
            <person name="White J."/>
            <person name="Sykes S."/>
            <person name="Heiman D."/>
            <person name="Young S."/>
            <person name="Zeng Q."/>
            <person name="Abouelleil A."/>
            <person name="Aftuck L."/>
            <person name="Bessette D."/>
            <person name="Brown A."/>
            <person name="FitzGerald M."/>
            <person name="Lui A."/>
            <person name="Macdonald J.P."/>
            <person name="Priest M."/>
            <person name="Orbach M.J."/>
            <person name="Galgiani J.N."/>
            <person name="Kirkland T.N."/>
            <person name="Cole G.T."/>
            <person name="Birren B.W."/>
            <person name="Henn M.R."/>
            <person name="Taylor J.W."/>
            <person name="Rounsley S.D."/>
        </authorList>
    </citation>
    <scope>GENOME REANNOTATION</scope>
    <source>
        <strain>RS</strain>
    </source>
</reference>